<dbReference type="EMBL" id="U24488">
    <property type="protein sequence ID" value="AAB41287.1"/>
    <property type="molecule type" value="mRNA"/>
</dbReference>
<dbReference type="EMBL" id="AF019413">
    <property type="protein sequence ID" value="AAB67981.1"/>
    <property type="status" value="ALT_SEQ"/>
    <property type="molecule type" value="Genomic_DNA"/>
</dbReference>
<dbReference type="EMBL" id="U89337">
    <property type="protein sequence ID" value="AAB47488.1"/>
    <property type="status" value="ALT_SEQ"/>
    <property type="molecule type" value="Genomic_DNA"/>
</dbReference>
<dbReference type="EMBL" id="AL049547">
    <property type="protein sequence ID" value="CAB89296.1"/>
    <property type="status" value="ALT_SEQ"/>
    <property type="molecule type" value="Genomic_DNA"/>
</dbReference>
<dbReference type="EMBL" id="AL049547">
    <property type="protein sequence ID" value="CAB89300.1"/>
    <property type="molecule type" value="Genomic_DNA"/>
</dbReference>
<dbReference type="EMBL" id="AL645922">
    <property type="status" value="NOT_ANNOTATED_CDS"/>
    <property type="molecule type" value="Genomic_DNA"/>
</dbReference>
<dbReference type="EMBL" id="AL662828">
    <property type="status" value="NOT_ANNOTATED_CDS"/>
    <property type="molecule type" value="Genomic_DNA"/>
</dbReference>
<dbReference type="EMBL" id="AL662849">
    <property type="status" value="NOT_ANNOTATED_CDS"/>
    <property type="molecule type" value="Genomic_DNA"/>
</dbReference>
<dbReference type="EMBL" id="AL662884">
    <property type="status" value="NOT_ANNOTATED_CDS"/>
    <property type="molecule type" value="Genomic_DNA"/>
</dbReference>
<dbReference type="EMBL" id="AL772248">
    <property type="status" value="NOT_ANNOTATED_CDS"/>
    <property type="molecule type" value="Genomic_DNA"/>
</dbReference>
<dbReference type="EMBL" id="CH471081">
    <property type="protein sequence ID" value="EAX03574.1"/>
    <property type="molecule type" value="Genomic_DNA"/>
</dbReference>
<dbReference type="EMBL" id="BC033740">
    <property type="protein sequence ID" value="AAH33740.1"/>
    <property type="molecule type" value="mRNA"/>
</dbReference>
<dbReference type="EMBL" id="BC125114">
    <property type="protein sequence ID" value="AAI25115.1"/>
    <property type="molecule type" value="mRNA"/>
</dbReference>
<dbReference type="EMBL" id="BC125115">
    <property type="protein sequence ID" value="AAI25116.1"/>
    <property type="molecule type" value="mRNA"/>
</dbReference>
<dbReference type="EMBL" id="BC130037">
    <property type="protein sequence ID" value="AAI30038.1"/>
    <property type="molecule type" value="mRNA"/>
</dbReference>
<dbReference type="EMBL" id="X71923">
    <property type="protein sequence ID" value="CAA50739.1"/>
    <property type="molecule type" value="mRNA"/>
</dbReference>
<dbReference type="EMBL" id="Y13782">
    <property type="protein sequence ID" value="CAA74109.1"/>
    <property type="molecule type" value="mRNA"/>
</dbReference>
<dbReference type="EMBL" id="Y13783">
    <property type="protein sequence ID" value="CAA74110.1"/>
    <property type="molecule type" value="Genomic_DNA"/>
</dbReference>
<dbReference type="EMBL" id="U52696">
    <property type="protein sequence ID" value="AAC50889.1"/>
    <property type="molecule type" value="mRNA"/>
</dbReference>
<dbReference type="EMBL" id="AB209012">
    <property type="protein sequence ID" value="BAD92249.1"/>
    <property type="molecule type" value="mRNA"/>
</dbReference>
<dbReference type="EMBL" id="M25813">
    <property type="protein sequence ID" value="AAA35884.1"/>
    <property type="molecule type" value="mRNA"/>
</dbReference>
<dbReference type="CCDS" id="CCDS4736.1">
    <molecule id="P22105-2"/>
</dbReference>
<dbReference type="CCDS" id="CCDS93886.1">
    <molecule id="P22105-3"/>
</dbReference>
<dbReference type="PIR" id="A40701">
    <property type="entry name" value="A40701"/>
</dbReference>
<dbReference type="PIR" id="A42175">
    <property type="entry name" value="A42175"/>
</dbReference>
<dbReference type="PIR" id="B42175">
    <property type="entry name" value="B42175"/>
</dbReference>
<dbReference type="PIR" id="D42175">
    <property type="entry name" value="D42175"/>
</dbReference>
<dbReference type="RefSeq" id="NP_001352205.1">
    <molecule id="P22105-3"/>
    <property type="nucleotide sequence ID" value="NM_001365276.2"/>
</dbReference>
<dbReference type="RefSeq" id="NP_061978.6">
    <molecule id="P22105-1"/>
    <property type="nucleotide sequence ID" value="NM_019105.6"/>
</dbReference>
<dbReference type="RefSeq" id="NP_115859.2">
    <molecule id="P22105-2"/>
    <property type="nucleotide sequence ID" value="NM_032470.3"/>
</dbReference>
<dbReference type="PDB" id="2CUH">
    <property type="method" value="NMR"/>
    <property type="chains" value="A=3845-3946"/>
</dbReference>
<dbReference type="PDB" id="2CUI">
    <property type="method" value="NMR"/>
    <property type="chains" value="A=3654-3752"/>
</dbReference>
<dbReference type="PDB" id="2CUM">
    <property type="method" value="NMR"/>
    <property type="chains" value="A=3933-4024"/>
</dbReference>
<dbReference type="PDBsum" id="2CUH"/>
<dbReference type="PDBsum" id="2CUI"/>
<dbReference type="PDBsum" id="2CUM"/>
<dbReference type="SMR" id="P22105"/>
<dbReference type="BioGRID" id="113001">
    <property type="interactions" value="48"/>
</dbReference>
<dbReference type="ComplexPortal" id="CPX-1014">
    <property type="entry name" value="Tenascin-X complex"/>
</dbReference>
<dbReference type="FunCoup" id="P22105">
    <property type="interactions" value="528"/>
</dbReference>
<dbReference type="IntAct" id="P22105">
    <property type="interactions" value="18"/>
</dbReference>
<dbReference type="MINT" id="P22105"/>
<dbReference type="STRING" id="9606.ENSP00000407685"/>
<dbReference type="GlyConnect" id="1794">
    <property type="glycosylation" value="7 N-Linked glycans (3 sites)"/>
</dbReference>
<dbReference type="GlyCosmos" id="P22105">
    <property type="glycosylation" value="43 sites, 13 glycans"/>
</dbReference>
<dbReference type="GlyGen" id="P22105">
    <property type="glycosylation" value="53 sites, 6 N-linked glycans (2 sites), 8 O-linked glycans (39 sites)"/>
</dbReference>
<dbReference type="iPTMnet" id="P22105"/>
<dbReference type="PhosphoSitePlus" id="P22105"/>
<dbReference type="SwissPalm" id="P22105"/>
<dbReference type="BioMuta" id="TNXB"/>
<dbReference type="DMDM" id="290457668"/>
<dbReference type="CPTAC" id="non-CPTAC-2701"/>
<dbReference type="jPOST" id="P22105"/>
<dbReference type="MassIVE" id="P22105"/>
<dbReference type="PaxDb" id="9606-ENSP00000407685"/>
<dbReference type="PeptideAtlas" id="P22105"/>
<dbReference type="ProteomicsDB" id="53963">
    <molecule id="P22105-1"/>
</dbReference>
<dbReference type="ProteomicsDB" id="53964">
    <molecule id="P22105-2"/>
</dbReference>
<dbReference type="ProteomicsDB" id="53965">
    <molecule id="P22105-3"/>
</dbReference>
<dbReference type="Pumba" id="P22105"/>
<dbReference type="Antibodypedia" id="3947">
    <property type="antibodies" value="223 antibodies from 31 providers"/>
</dbReference>
<dbReference type="DNASU" id="7148"/>
<dbReference type="Ensembl" id="ENST00000375244.7">
    <molecule id="P22105-3"/>
    <property type="protein sequence ID" value="ENSP00000364393.3"/>
    <property type="gene ID" value="ENSG00000168477.21"/>
</dbReference>
<dbReference type="Ensembl" id="ENST00000451343.4">
    <molecule id="P22105-2"/>
    <property type="protein sequence ID" value="ENSP00000407685.1"/>
    <property type="gene ID" value="ENSG00000168477.21"/>
</dbReference>
<dbReference type="Ensembl" id="ENST00000546684.2">
    <property type="protein sequence ID" value="ENSP00000447694.2"/>
    <property type="gene ID" value="ENSG00000236236.9"/>
</dbReference>
<dbReference type="Ensembl" id="ENST00000550539.2">
    <property type="protein sequence ID" value="ENSP00000448326.2"/>
    <property type="gene ID" value="ENSG00000229353.10"/>
</dbReference>
<dbReference type="Ensembl" id="ENST00000644971.2">
    <molecule id="P22105-3"/>
    <property type="protein sequence ID" value="ENSP00000496448.1"/>
    <property type="gene ID" value="ENSG00000168477.21"/>
</dbReference>
<dbReference type="GeneID" id="7148"/>
<dbReference type="KEGG" id="hsa:7148"/>
<dbReference type="MANE-Select" id="ENST00000644971.2">
    <property type="protein sequence ID" value="ENSP00000496448.1"/>
    <property type="RefSeq nucleotide sequence ID" value="NM_001365276.2"/>
    <property type="RefSeq protein sequence ID" value="NP_001352205.1"/>
</dbReference>
<dbReference type="UCSC" id="uc003nzg.1">
    <molecule id="P22105-3"/>
    <property type="organism name" value="human"/>
</dbReference>
<dbReference type="AGR" id="HGNC:11976"/>
<dbReference type="CTD" id="7148"/>
<dbReference type="DisGeNET" id="7148"/>
<dbReference type="GeneCards" id="TNXB"/>
<dbReference type="GeneReviews" id="TNXB"/>
<dbReference type="HGNC" id="HGNC:11976">
    <property type="gene designation" value="TNXB"/>
</dbReference>
<dbReference type="HPA" id="ENSG00000168477">
    <property type="expression patterns" value="Tissue enhanced (adrenal)"/>
</dbReference>
<dbReference type="MalaCards" id="TNXB"/>
<dbReference type="MIM" id="600985">
    <property type="type" value="gene"/>
</dbReference>
<dbReference type="MIM" id="606408">
    <property type="type" value="phenotype"/>
</dbReference>
<dbReference type="MIM" id="615963">
    <property type="type" value="phenotype"/>
</dbReference>
<dbReference type="neXtProt" id="NX_P22105"/>
<dbReference type="OpenTargets" id="ENSG00000168477"/>
<dbReference type="Orphanet" id="230839">
    <property type="disease" value="Classical-like Ehlers-Danlos syndrome type 1"/>
</dbReference>
<dbReference type="Orphanet" id="289365">
    <property type="disease" value="Familial vesicoureteral reflux"/>
</dbReference>
<dbReference type="PharmGKB" id="PA36662"/>
<dbReference type="VEuPathDB" id="HostDB:ENSG00000168477"/>
<dbReference type="eggNOG" id="KOG2579">
    <property type="taxonomic scope" value="Eukaryota"/>
</dbReference>
<dbReference type="GeneTree" id="ENSGT00940000155565"/>
<dbReference type="HOGENOM" id="CLU_026380_0_0_1"/>
<dbReference type="InParanoid" id="P22105"/>
<dbReference type="OrthoDB" id="6130531at2759"/>
<dbReference type="PAN-GO" id="P22105">
    <property type="GO annotations" value="5 GO annotations based on evolutionary models"/>
</dbReference>
<dbReference type="TreeFam" id="TF329915"/>
<dbReference type="PathwayCommons" id="P22105"/>
<dbReference type="Reactome" id="R-HSA-3000178">
    <property type="pathway name" value="ECM proteoglycans"/>
</dbReference>
<dbReference type="SignaLink" id="P22105"/>
<dbReference type="BioGRID-ORCS" id="7148">
    <property type="hits" value="16 hits in 1152 CRISPR screens"/>
</dbReference>
<dbReference type="CD-CODE" id="DEE660B4">
    <property type="entry name" value="Stress granule"/>
</dbReference>
<dbReference type="ChiTaRS" id="TNXB">
    <property type="organism name" value="human"/>
</dbReference>
<dbReference type="EvolutionaryTrace" id="P22105"/>
<dbReference type="GeneWiki" id="Tenascin_X"/>
<dbReference type="GenomeRNAi" id="7148"/>
<dbReference type="Pharos" id="P22105">
    <property type="development level" value="Tbio"/>
</dbReference>
<dbReference type="PRO" id="PR:P22105"/>
<dbReference type="Proteomes" id="UP000005640">
    <property type="component" value="Chromosome 6"/>
</dbReference>
<dbReference type="RNAct" id="P22105">
    <property type="molecule type" value="protein"/>
</dbReference>
<dbReference type="Bgee" id="ENSG00000168477">
    <property type="expression patterns" value="Expressed in apex of heart and 98 other cell types or tissues"/>
</dbReference>
<dbReference type="ExpressionAtlas" id="P22105">
    <property type="expression patterns" value="baseline and differential"/>
</dbReference>
<dbReference type="GO" id="GO:0062023">
    <property type="term" value="C:collagen-containing extracellular matrix"/>
    <property type="evidence" value="ECO:0007005"/>
    <property type="project" value="BHF-UCL"/>
</dbReference>
<dbReference type="GO" id="GO:0070062">
    <property type="term" value="C:extracellular exosome"/>
    <property type="evidence" value="ECO:0007005"/>
    <property type="project" value="UniProtKB"/>
</dbReference>
<dbReference type="GO" id="GO:0031012">
    <property type="term" value="C:extracellular matrix"/>
    <property type="evidence" value="ECO:0000303"/>
    <property type="project" value="UniProtKB"/>
</dbReference>
<dbReference type="GO" id="GO:0005576">
    <property type="term" value="C:extracellular region"/>
    <property type="evidence" value="ECO:0007005"/>
    <property type="project" value="BHF-UCL"/>
</dbReference>
<dbReference type="GO" id="GO:0005615">
    <property type="term" value="C:extracellular space"/>
    <property type="evidence" value="ECO:0007005"/>
    <property type="project" value="BHF-UCL"/>
</dbReference>
<dbReference type="GO" id="GO:0043231">
    <property type="term" value="C:intracellular membrane-bounded organelle"/>
    <property type="evidence" value="ECO:0000314"/>
    <property type="project" value="HPA"/>
</dbReference>
<dbReference type="GO" id="GO:0090733">
    <property type="term" value="C:tenascin complex"/>
    <property type="evidence" value="ECO:0000266"/>
    <property type="project" value="ComplexPortal"/>
</dbReference>
<dbReference type="GO" id="GO:0005518">
    <property type="term" value="F:collagen binding"/>
    <property type="evidence" value="ECO:0007669"/>
    <property type="project" value="Ensembl"/>
</dbReference>
<dbReference type="GO" id="GO:0098633">
    <property type="term" value="F:collagen fibril binding"/>
    <property type="evidence" value="ECO:0000314"/>
    <property type="project" value="UniProtKB"/>
</dbReference>
<dbReference type="GO" id="GO:0005201">
    <property type="term" value="F:extracellular matrix structural constituent"/>
    <property type="evidence" value="ECO:0000250"/>
    <property type="project" value="BHF-UCL"/>
</dbReference>
<dbReference type="GO" id="GO:0008201">
    <property type="term" value="F:heparin binding"/>
    <property type="evidence" value="ECO:0000250"/>
    <property type="project" value="UniProtKB"/>
</dbReference>
<dbReference type="GO" id="GO:0005178">
    <property type="term" value="F:integrin binding"/>
    <property type="evidence" value="ECO:0000250"/>
    <property type="project" value="UniProtKB"/>
</dbReference>
<dbReference type="GO" id="GO:0030036">
    <property type="term" value="P:actin cytoskeleton organization"/>
    <property type="evidence" value="ECO:0000250"/>
    <property type="project" value="UniProtKB"/>
</dbReference>
<dbReference type="GO" id="GO:0007155">
    <property type="term" value="P:cell adhesion"/>
    <property type="evidence" value="ECO:0000250"/>
    <property type="project" value="UniProtKB"/>
</dbReference>
<dbReference type="GO" id="GO:0098609">
    <property type="term" value="P:cell-cell adhesion"/>
    <property type="evidence" value="ECO:0007669"/>
    <property type="project" value="Ensembl"/>
</dbReference>
<dbReference type="GO" id="GO:0007160">
    <property type="term" value="P:cell-matrix adhesion"/>
    <property type="evidence" value="ECO:0007669"/>
    <property type="project" value="Ensembl"/>
</dbReference>
<dbReference type="GO" id="GO:0030199">
    <property type="term" value="P:collagen fibril organization"/>
    <property type="evidence" value="ECO:0007669"/>
    <property type="project" value="Ensembl"/>
</dbReference>
<dbReference type="GO" id="GO:0032963">
    <property type="term" value="P:collagen metabolic process"/>
    <property type="evidence" value="ECO:0000315"/>
    <property type="project" value="UniProtKB"/>
</dbReference>
<dbReference type="GO" id="GO:0048251">
    <property type="term" value="P:elastic fiber assembly"/>
    <property type="evidence" value="ECO:0000315"/>
    <property type="project" value="UniProtKB"/>
</dbReference>
<dbReference type="GO" id="GO:0006631">
    <property type="term" value="P:fatty acid metabolic process"/>
    <property type="evidence" value="ECO:0007669"/>
    <property type="project" value="Ensembl"/>
</dbReference>
<dbReference type="GO" id="GO:0031175">
    <property type="term" value="P:neuron projection development"/>
    <property type="evidence" value="ECO:0000318"/>
    <property type="project" value="GO_Central"/>
</dbReference>
<dbReference type="GO" id="GO:1905935">
    <property type="term" value="P:positive regulation of cell fate determination"/>
    <property type="evidence" value="ECO:0000303"/>
    <property type="project" value="ComplexPortal"/>
</dbReference>
<dbReference type="GO" id="GO:0008284">
    <property type="term" value="P:positive regulation of cell population proliferation"/>
    <property type="evidence" value="ECO:0000266"/>
    <property type="project" value="ComplexPortal"/>
</dbReference>
<dbReference type="GO" id="GO:1904028">
    <property type="term" value="P:positive regulation of collagen fibril organization"/>
    <property type="evidence" value="ECO:0000314"/>
    <property type="project" value="ComplexPortal"/>
</dbReference>
<dbReference type="GO" id="GO:0010718">
    <property type="term" value="P:positive regulation of epithelial to mesenchymal transition"/>
    <property type="evidence" value="ECO:0000266"/>
    <property type="project" value="ComplexPortal"/>
</dbReference>
<dbReference type="GO" id="GO:1900748">
    <property type="term" value="P:positive regulation of vascular endothelial growth factor signaling pathway"/>
    <property type="evidence" value="ECO:0000266"/>
    <property type="project" value="ComplexPortal"/>
</dbReference>
<dbReference type="GO" id="GO:0030155">
    <property type="term" value="P:regulation of cell adhesion"/>
    <property type="evidence" value="ECO:0000266"/>
    <property type="project" value="ComplexPortal"/>
</dbReference>
<dbReference type="GO" id="GO:0045595">
    <property type="term" value="P:regulation of cell differentiation"/>
    <property type="evidence" value="ECO:0000303"/>
    <property type="project" value="ComplexPortal"/>
</dbReference>
<dbReference type="GO" id="GO:0030334">
    <property type="term" value="P:regulation of cell migration"/>
    <property type="evidence" value="ECO:0000266"/>
    <property type="project" value="ComplexPortal"/>
</dbReference>
<dbReference type="GO" id="GO:0046328">
    <property type="term" value="P:regulation of JNK cascade"/>
    <property type="evidence" value="ECO:0007669"/>
    <property type="project" value="Ensembl"/>
</dbReference>
<dbReference type="GO" id="GO:0006641">
    <property type="term" value="P:triglyceride metabolic process"/>
    <property type="evidence" value="ECO:0007669"/>
    <property type="project" value="Ensembl"/>
</dbReference>
<dbReference type="CDD" id="cd00054">
    <property type="entry name" value="EGF_CA"/>
    <property type="match status" value="4"/>
</dbReference>
<dbReference type="CDD" id="cd00063">
    <property type="entry name" value="FN3"/>
    <property type="match status" value="31"/>
</dbReference>
<dbReference type="CDD" id="cd00087">
    <property type="entry name" value="FReD"/>
    <property type="match status" value="1"/>
</dbReference>
<dbReference type="FunFam" id="2.10.25.10:FF:000001">
    <property type="entry name" value="Tenascin C"/>
    <property type="match status" value="17"/>
</dbReference>
<dbReference type="FunFam" id="3.90.215.10:FF:000001">
    <property type="entry name" value="Tenascin isoform 1"/>
    <property type="match status" value="1"/>
</dbReference>
<dbReference type="FunFam" id="2.60.40.10:FF:000024">
    <property type="entry name" value="Tenascin-X"/>
    <property type="match status" value="25"/>
</dbReference>
<dbReference type="FunFam" id="2.60.40.10:FF:000701">
    <property type="entry name" value="Tenascin-X"/>
    <property type="match status" value="1"/>
</dbReference>
<dbReference type="FunFam" id="2.60.40.10:FF:000794">
    <property type="entry name" value="Tenascin-X"/>
    <property type="match status" value="1"/>
</dbReference>
<dbReference type="FunFam" id="2.60.40.10:FF:000801">
    <property type="entry name" value="Tenascin-X"/>
    <property type="match status" value="1"/>
</dbReference>
<dbReference type="FunFam" id="2.60.40.10:FF:000760">
    <property type="entry name" value="tenascin-X"/>
    <property type="match status" value="1"/>
</dbReference>
<dbReference type="FunFam" id="2.60.40.10:FF:000822">
    <property type="entry name" value="tenascin-X"/>
    <property type="match status" value="1"/>
</dbReference>
<dbReference type="FunFam" id="2.60.40.10:FF:000883">
    <property type="entry name" value="tenascin-X"/>
    <property type="match status" value="1"/>
</dbReference>
<dbReference type="Gene3D" id="3.90.215.10">
    <property type="entry name" value="Gamma Fibrinogen, chain A, domain 1"/>
    <property type="match status" value="1"/>
</dbReference>
<dbReference type="Gene3D" id="2.60.40.10">
    <property type="entry name" value="Immunoglobulins"/>
    <property type="match status" value="31"/>
</dbReference>
<dbReference type="Gene3D" id="2.10.25.10">
    <property type="entry name" value="Laminin"/>
    <property type="match status" value="17"/>
</dbReference>
<dbReference type="InterPro" id="IPR050991">
    <property type="entry name" value="ECM_Regulatory_Proteins"/>
</dbReference>
<dbReference type="InterPro" id="IPR000742">
    <property type="entry name" value="EGF-like_dom"/>
</dbReference>
<dbReference type="InterPro" id="IPR041161">
    <property type="entry name" value="EGF_Tenascin"/>
</dbReference>
<dbReference type="InterPro" id="IPR036056">
    <property type="entry name" value="Fibrinogen-like_C"/>
</dbReference>
<dbReference type="InterPro" id="IPR014716">
    <property type="entry name" value="Fibrinogen_a/b/g_C_1"/>
</dbReference>
<dbReference type="InterPro" id="IPR002181">
    <property type="entry name" value="Fibrinogen_a/b/g_C_dom"/>
</dbReference>
<dbReference type="InterPro" id="IPR020837">
    <property type="entry name" value="Fibrinogen_CS"/>
</dbReference>
<dbReference type="InterPro" id="IPR003961">
    <property type="entry name" value="FN3_dom"/>
</dbReference>
<dbReference type="InterPro" id="IPR036116">
    <property type="entry name" value="FN3_sf"/>
</dbReference>
<dbReference type="InterPro" id="IPR013783">
    <property type="entry name" value="Ig-like_fold"/>
</dbReference>
<dbReference type="PANTHER" id="PTHR46708">
    <property type="entry name" value="TENASCIN"/>
    <property type="match status" value="1"/>
</dbReference>
<dbReference type="PANTHER" id="PTHR46708:SF3">
    <property type="entry name" value="TENASCIN-X"/>
    <property type="match status" value="1"/>
</dbReference>
<dbReference type="Pfam" id="PF25024">
    <property type="entry name" value="EGF_TEN"/>
    <property type="match status" value="1"/>
</dbReference>
<dbReference type="Pfam" id="PF18720">
    <property type="entry name" value="EGF_Tenascin"/>
    <property type="match status" value="2"/>
</dbReference>
<dbReference type="Pfam" id="PF23106">
    <property type="entry name" value="EGF_Teneurin"/>
    <property type="match status" value="5"/>
</dbReference>
<dbReference type="Pfam" id="PF00147">
    <property type="entry name" value="Fibrinogen_C"/>
    <property type="match status" value="1"/>
</dbReference>
<dbReference type="Pfam" id="PF00041">
    <property type="entry name" value="fn3"/>
    <property type="match status" value="31"/>
</dbReference>
<dbReference type="SMART" id="SM00181">
    <property type="entry name" value="EGF"/>
    <property type="match status" value="18"/>
</dbReference>
<dbReference type="SMART" id="SM00186">
    <property type="entry name" value="FBG"/>
    <property type="match status" value="1"/>
</dbReference>
<dbReference type="SMART" id="SM00060">
    <property type="entry name" value="FN3"/>
    <property type="match status" value="32"/>
</dbReference>
<dbReference type="SUPFAM" id="SSF56496">
    <property type="entry name" value="Fibrinogen C-terminal domain-like"/>
    <property type="match status" value="1"/>
</dbReference>
<dbReference type="SUPFAM" id="SSF49265">
    <property type="entry name" value="Fibronectin type III"/>
    <property type="match status" value="29"/>
</dbReference>
<dbReference type="PROSITE" id="PS00022">
    <property type="entry name" value="EGF_1"/>
    <property type="match status" value="18"/>
</dbReference>
<dbReference type="PROSITE" id="PS01186">
    <property type="entry name" value="EGF_2"/>
    <property type="match status" value="19"/>
</dbReference>
<dbReference type="PROSITE" id="PS50026">
    <property type="entry name" value="EGF_3"/>
    <property type="match status" value="8"/>
</dbReference>
<dbReference type="PROSITE" id="PS00514">
    <property type="entry name" value="FIBRINOGEN_C_1"/>
    <property type="match status" value="1"/>
</dbReference>
<dbReference type="PROSITE" id="PS51406">
    <property type="entry name" value="FIBRINOGEN_C_2"/>
    <property type="match status" value="1"/>
</dbReference>
<dbReference type="PROSITE" id="PS50853">
    <property type="entry name" value="FN3"/>
    <property type="match status" value="32"/>
</dbReference>
<proteinExistence type="evidence at protein level"/>
<evidence type="ECO:0000250" key="1"/>
<evidence type="ECO:0000255" key="2"/>
<evidence type="ECO:0000255" key="3">
    <source>
        <dbReference type="PROSITE-ProRule" id="PRU00076"/>
    </source>
</evidence>
<evidence type="ECO:0000255" key="4">
    <source>
        <dbReference type="PROSITE-ProRule" id="PRU00316"/>
    </source>
</evidence>
<evidence type="ECO:0000255" key="5">
    <source>
        <dbReference type="PROSITE-ProRule" id="PRU00739"/>
    </source>
</evidence>
<evidence type="ECO:0000256" key="6">
    <source>
        <dbReference type="SAM" id="MobiDB-lite"/>
    </source>
</evidence>
<evidence type="ECO:0000269" key="7">
    <source>
    </source>
</evidence>
<evidence type="ECO:0000269" key="8">
    <source>
    </source>
</evidence>
<evidence type="ECO:0000269" key="9">
    <source>
    </source>
</evidence>
<evidence type="ECO:0000269" key="10">
    <source>
    </source>
</evidence>
<evidence type="ECO:0000269" key="11">
    <source>
    </source>
</evidence>
<evidence type="ECO:0000269" key="12">
    <source>
    </source>
</evidence>
<evidence type="ECO:0000269" key="13">
    <source>
    </source>
</evidence>
<evidence type="ECO:0000269" key="14">
    <source>
    </source>
</evidence>
<evidence type="ECO:0000305" key="15"/>
<evidence type="ECO:0000312" key="16">
    <source>
        <dbReference type="HGNC" id="HGNC:11976"/>
    </source>
</evidence>
<evidence type="ECO:0007829" key="17">
    <source>
        <dbReference type="PDB" id="2CUH"/>
    </source>
</evidence>
<evidence type="ECO:0007829" key="18">
    <source>
        <dbReference type="PDB" id="2CUI"/>
    </source>
</evidence>
<evidence type="ECO:0007829" key="19">
    <source>
        <dbReference type="PDB" id="2CUM"/>
    </source>
</evidence>
<keyword id="KW-0002">3D-structure</keyword>
<keyword id="KW-0025">Alternative splicing</keyword>
<keyword id="KW-0130">Cell adhesion</keyword>
<keyword id="KW-0175">Coiled coil</keyword>
<keyword id="KW-0903">Direct protein sequencing</keyword>
<keyword id="KW-0225">Disease variant</keyword>
<keyword id="KW-1015">Disulfide bond</keyword>
<keyword id="KW-0245">EGF-like domain</keyword>
<keyword id="KW-0248">Ehlers-Danlos syndrome</keyword>
<keyword id="KW-0272">Extracellular matrix</keyword>
<keyword id="KW-0325">Glycoprotein</keyword>
<keyword id="KW-1267">Proteomics identification</keyword>
<keyword id="KW-1185">Reference proteome</keyword>
<keyword id="KW-0677">Repeat</keyword>
<keyword id="KW-0964">Secreted</keyword>
<keyword id="KW-0732">Signal</keyword>
<gene>
    <name evidence="16" type="primary">TNXB</name>
    <name type="synonym">HXBL</name>
    <name type="synonym">TNX</name>
    <name type="synonym">TNXB1</name>
    <name type="synonym">TNXB2</name>
    <name type="synonym">XB</name>
</gene>
<protein>
    <recommendedName>
        <fullName evidence="15">Tenascin-X</fullName>
        <shortName>TN-X</shortName>
    </recommendedName>
    <alternativeName>
        <fullName>Hexabrachion-like protein</fullName>
    </alternativeName>
</protein>
<sequence>MMPAQYALTSSLVLLVLLSTARAGPFSSRSNVTLPAPRPPPQPGGHTVGAGVGSPSSQLYEHTVEGGEKQVVFTHRINLPPSTGCGCPPGTEPPVLASEVQALRVRLEILEELVKGLKEQCTGGCCPASAQAGTGQTDVRTLCSLHGVFDLSRCTCSCEPGWGGPTCSDPTDAEIPPSSPPSASGSCPDDCNDQGRCVRGRCVCFPGYTGPSCGWPSCPGDCQGRGRCVQGVCVCRAGFSGPDCSQRSCPRGCSQRGRCEGGRCVCDPGYTGDDCGMRSCPRGCSQRGRCENGRCVCNPGYTGEDCGVRSCPRGCSQRGRCKDGRCVCDPGYTGEDCGTRSCPWDCGEGGRCVDGRCVCWPGYTGEDCSTRTCPRDCRGRGRCEDGECICDTGYSGDDCGVRSCPGDCNQRGRCEDGRCVCWPGYTGTDCGSRACPRDCRGRGRCENGVCVCNAGYSGEDCGVRSCPGDCRGRGRCESGRCMCWPGYTGRDCGTRACPGDCRGRGRCVDGRCVCNPGFTGEDCGSRRCPGDCRGHGLCEDGVCVCDAGYSGEDCSTRSCPGGCRGRGQCLDGRCVCEDGYSGEDCGVRQCPNDCSQHGVCQDGVCICWEGYVSEDCSIRTCPSNCHGRGRCEEGRCLCDPGYTGPTCATRMCPADCRGRGRCVQGVCLCHVGYGGEDCGQEEPPASACPGGCGPRELCRAGQCVCVEGFRGPDCAIQTCPGDCRGRGECHDGSCVCKDGYAGEDCGEEVPTIEGMRMHLLEETTVRTEWTPAPGPVDAYEIQFIPTTEGASPPFTARVPSSASAYDQRGLAPGQEYQVTVRALRGTSWGLPASKTITTMIDGPQDLRVVAVTPTTLELGWLRPQAEVDRFVVSYVSAGNQRVRLEVPPEADGTLLTDLMPGVEYVVTVTAERGRAVSYPASVRANTGSSPLGLLGTTDEPPPSGPSTTQGAQAPLLQQRPQELGELRVLGRDETGRLRVVWTAQPDTFAYFQLRMRVPEGPGAHEEVLPGDVRQALVPPPPPGTPYELSLHGVPPGGKPSDPIIYQGIMDKDEEKPGKSSGPPRLGELTVTDRTSDSLLLRWTVPEGEFDSFVIQYKDRDGQPQVVPVEGPQRSAVITSLDPGRKYKFVLYGFVGKKRHGPLVAEAKILPQSDPSPGTPPHLGNLWVTDPTPDSLHLSWTVPEGQFDTFMVQYRDRDGRPQVVPVEGPERSFVVSSLDPDHKYRFTLFGIANKKRYGPLTADGTTAPERKEEPPRPEFLEQPLLGELTVTGVTPDSLRLSWTVAQGPFDSFMVQYKDAQGQPQAVPVAGDENEVTVPGLDPDRKYKMNLYGLRGRQRVGPESVVAKTAPQEDVDETPSPTELGTEAPESPEEPLLGELTVTGSSPDSLSLFWTVPQGSFDSFTVQYKDRDGRPRAVRVGGKESEVTVGGLEPGHKYKMHLYGLHEGQRVGPVSAVGVTAPQQEETPPATESPLEPRLGELTVTDVTPNSVGLSWTVPEGQFDSFIVQYKDKDGQPQVVPVAADQREVTVYNLEPERKYKMNMYGLHDGQRMGPLSVVIVTAPLPPAPATEASKPPLEPRLGELTVTDITPDSVGLSWTVPEGEFDSFVVQYKDRDGQPQVVPVAADQREVTIPDLEPSRKYKFLLFGIQDGKRRSPVSVEAKTVARGDASPGAPPRLGELWVTDPTPDSLRLSWTVPEGQFDSFVVQFKDKDGPQVVPVEGHERSVTVTPLDAGRKYRFLLYGLLGKKRHGPLTADGTTEARSAMDDTGTKRPPKPRLGEELQVTTVTQNSVGLSWTVPEGQFDSFVVQYKDRDGQPQVVPVEGSLREVSVPGLDPAHRYKLLLYGLHHGKRVGPISAVAITAGREETETETTAPTPPAPEPHLGELTVEEATSHTLHLSWMVTEGEFDSFEIQYTDRDGQLQMVRIGGDRNDITLSGLESDHRYLVTLYGFSDGKHVGPVHVEALTVPEEEKPSEPPTATPEPPIKPRLGELTVTDATPDSLSLSWTVPEGQFDHFLVQYRNGDGQPKAVRVPGHEEGVTISGLEPDHKYKMNLYGFHGGQRMGPVSVVGVTAAEEETPSPTEPSMEAPEPAEEPLLGELTVTGSSPDSLSLSWTVPQGRFDSFTVQYKDRDGRPQVVRVGGEESEVTVGGLEPGRKYKMHLYGLHEGRRVGPVSAVGVTAPEEESPDAPLAKLRLGQMTVRDITSDSLSLSWTVPEGQFDHFLVQFKNGDGQPKAVRVPGHEDGVTISGLEPDHKYKMNLYGFHGGQRVGPVSAVGLTAPGKDEEMAPASTEPPTPEPPIKPRLEELTVTDATPDSLSLSWTVPEGQFDHFLVQYKNGDGQPKATRVPGHEDRVTISGLEPDNKYKMNLYGFHGGQRVGPVSAIGVTAAEEETPSPTEPSMEAPEPPEEPLLGELTVTGSSPDSLSLSWTVPQGRFDSFTVQYKDRDGRPQVVRVGGEESEVTVGGLEPGRKYKMHLYGLHEGRRVGPVSTVGVTAPQEDVDETPSPTEPGTEAPGPPEEPLLGELTVTGSSPDSLSLSWTVPQGRFDSFTVQYKDRDGRPQAVRVGGQESKVTVRGLEPGRKYKMHLYGLHEGRRLGPVSAVGVTEDEAETTQAVPTMTPEPPIKPRLGELTMTDATPDSLSLSWTVPEGQFDHFLVQYRNGDGQPKAVRVPGHEDGVTISGLEPDHKYKMNLYGFHGGQRVGPISVIGVTAAEEETPSPTELSTEAPEPPEEPLLGELTVTGSSPDSLSLSWTIPQGHFDSFTVQYKDRDGRPQVMRVRGEESEVTVGGLEPGRKYKMHLYGLHEGRRVGPVSTVGVTAPEDEAETTQAVPTTTPEPPNKPRLGELTVTDATPDSLSLSWMVPEGQFDHFLVQYRNGDGQPKVVRVPGHEDGVTISGLEPDHKYKMNLYGFHGGQRVGPISVIGVTAAEEETPAPTEPSTEAPEPPEEPLLGELTVTGSSPDSLSLSWTIPQGRFDSFTVQYKDRDGRPQVVRVRGEESEVTVGGLEPGCKYKMHLYGLHEGQRVGPVSAVGVTAPKDEAETTQAVPTMTPEPPIKPRLGELTVTDATPDSLSLSWMVPEGQFDHFLVQYRNGDGQPKAVRVPGHEDGVTISGLEPDHKYKMNLYGFHGGQRVGPVSAIGVTEEETPSPTEPSTEAPEAPEEPLLGELTVTGSSPDSLSLSWTVPQGRFDSFTVQYKDRDGQPQVVRVRGEESEVTVGGLEPGRKYKMHLYGLHEGQRVGPVSTVGITAPLPTPLPVEPRLGELAVAAVTSDSVGLSWTVAQGPFDSFLVQYRDAQGQPQAVPVSGDLRAVAVSGLDPARKYKFLLFGLQNGKRHGPVPVEARTAPDTKPSPRLGELTVTDATPDSVGLSWTVPEGEFDSFVVQYKDKDGRLQVVPVAANQREVTVQGLEPSRKYRFLLYGLSGRKRLGPISADSTTAPLEKELPPHLGELTVAEETSSSLRLSWTVAQGPFDSFVVQYRDTDGQPRAVPVAADQRTVTVEDLEPGKKYKFLLYGLLGGKRLGPVSALGMTAPEEDTPAPELAPEAPEPPEEPRLGVLTVTDTTPDSMRLSWSVAQGPFDSFVVQYEDTNGQPQALLVDGDQSKILISGLEPSTPYRFLLYGLHEGKRLGPLSAEGTTGLAPAGQTSEESRPRLSQLSVTDVTTSSLRLNWEAPPGAFDSFLLRFGVPSPSTLEPHPRPLLQRELMVPGTRHSAVLRDLRSGTLYSLTLYGLRGPHKADSIQGTARTLSPVLESPRDLQFSEIRETSAKVNWMPPPSRADSFKVSYQLADGGEPQSVQVDGQARTQKLQGLIPGARYEVTVVSVRGFEESEPLTGFLTTVPDGPTQLRALNLTEGFAVLHWKPPQNPVDTYDVQVTAPGAPPLQAETPGSAVDYPLHDLVLHTNYTATVRGLRGPNLTSPASITFTTGLEAPRDLEAKEVTPRTALLTWTEPPVRPAGYLLSFHTPGGQNQEILLPGGITSHQLLGLFPSTSYNARLQAMWGQSLLPPVSTSFTTGGLRIPFPRDCGEEMQNGAGASRTSTIFLNGNRERPLNVFCDMETDGGGWLVFQRRMDGQTDFWRDWEDYAHGFGNISGEFWLGNEALHSLTQAGDYSMRVDLRAGDEAVFAQYDSFHVDSAAEYYRLHLEGYHGTAGDSMSYHSGSVFSARDRDPNSLLISCAVSYRGAWWYRNCHYANLNGLYGSTVDHQGVSWYHWKGFEFSVPFTEMKLRPRNFRSPAGGG</sequence>
<reference key="1">
    <citation type="journal article" date="1995" name="Genomics">
        <title>Sequences promoting the transcription of the human XA gene overlapping P450c21A correctly predict the presence of a novel, adrenal-specific, truncated form of tenascin-X.</title>
        <authorList>
            <person name="Tee M.K."/>
            <person name="Thomson A.A."/>
            <person name="Bristow J."/>
            <person name="Miller W.L."/>
        </authorList>
    </citation>
    <scope>NUCLEOTIDE SEQUENCE [MRNA] (ISOFORM XB-SHORT)</scope>
    <source>
        <tissue>Adrenal gland</tissue>
    </source>
</reference>
<reference key="2">
    <citation type="journal article" date="2003" name="Genome Res.">
        <title>Analysis of the gene-dense major histocompatibility complex class III region and its comparison to mouse.</title>
        <authorList>
            <person name="Xie T."/>
            <person name="Rowen L."/>
            <person name="Aguado B."/>
            <person name="Ahearn M.E."/>
            <person name="Madan A."/>
            <person name="Qin S."/>
            <person name="Campbell R.D."/>
            <person name="Hood L."/>
        </authorList>
    </citation>
    <scope>NUCLEOTIDE SEQUENCE [LARGE SCALE GENOMIC DNA]</scope>
    <scope>VARIANT GLU-2518</scope>
</reference>
<reference key="3">
    <citation type="journal article" date="2003" name="Nature">
        <title>The DNA sequence and analysis of human chromosome 6.</title>
        <authorList>
            <person name="Mungall A.J."/>
            <person name="Palmer S.A."/>
            <person name="Sims S.K."/>
            <person name="Edwards C.A."/>
            <person name="Ashurst J.L."/>
            <person name="Wilming L."/>
            <person name="Jones M.C."/>
            <person name="Horton R."/>
            <person name="Hunt S.E."/>
            <person name="Scott C.E."/>
            <person name="Gilbert J.G.R."/>
            <person name="Clamp M.E."/>
            <person name="Bethel G."/>
            <person name="Milne S."/>
            <person name="Ainscough R."/>
            <person name="Almeida J.P."/>
            <person name="Ambrose K.D."/>
            <person name="Andrews T.D."/>
            <person name="Ashwell R.I.S."/>
            <person name="Babbage A.K."/>
            <person name="Bagguley C.L."/>
            <person name="Bailey J."/>
            <person name="Banerjee R."/>
            <person name="Barker D.J."/>
            <person name="Barlow K.F."/>
            <person name="Bates K."/>
            <person name="Beare D.M."/>
            <person name="Beasley H."/>
            <person name="Beasley O."/>
            <person name="Bird C.P."/>
            <person name="Blakey S.E."/>
            <person name="Bray-Allen S."/>
            <person name="Brook J."/>
            <person name="Brown A.J."/>
            <person name="Brown J.Y."/>
            <person name="Burford D.C."/>
            <person name="Burrill W."/>
            <person name="Burton J."/>
            <person name="Carder C."/>
            <person name="Carter N.P."/>
            <person name="Chapman J.C."/>
            <person name="Clark S.Y."/>
            <person name="Clark G."/>
            <person name="Clee C.M."/>
            <person name="Clegg S."/>
            <person name="Cobley V."/>
            <person name="Collier R.E."/>
            <person name="Collins J.E."/>
            <person name="Colman L.K."/>
            <person name="Corby N.R."/>
            <person name="Coville G.J."/>
            <person name="Culley K.M."/>
            <person name="Dhami P."/>
            <person name="Davies J."/>
            <person name="Dunn M."/>
            <person name="Earthrowl M.E."/>
            <person name="Ellington A.E."/>
            <person name="Evans K.A."/>
            <person name="Faulkner L."/>
            <person name="Francis M.D."/>
            <person name="Frankish A."/>
            <person name="Frankland J."/>
            <person name="French L."/>
            <person name="Garner P."/>
            <person name="Garnett J."/>
            <person name="Ghori M.J."/>
            <person name="Gilby L.M."/>
            <person name="Gillson C.J."/>
            <person name="Glithero R.J."/>
            <person name="Grafham D.V."/>
            <person name="Grant M."/>
            <person name="Gribble S."/>
            <person name="Griffiths C."/>
            <person name="Griffiths M.N.D."/>
            <person name="Hall R."/>
            <person name="Halls K.S."/>
            <person name="Hammond S."/>
            <person name="Harley J.L."/>
            <person name="Hart E.A."/>
            <person name="Heath P.D."/>
            <person name="Heathcott R."/>
            <person name="Holmes S.J."/>
            <person name="Howden P.J."/>
            <person name="Howe K.L."/>
            <person name="Howell G.R."/>
            <person name="Huckle E."/>
            <person name="Humphray S.J."/>
            <person name="Humphries M.D."/>
            <person name="Hunt A.R."/>
            <person name="Johnson C.M."/>
            <person name="Joy A.A."/>
            <person name="Kay M."/>
            <person name="Keenan S.J."/>
            <person name="Kimberley A.M."/>
            <person name="King A."/>
            <person name="Laird G.K."/>
            <person name="Langford C."/>
            <person name="Lawlor S."/>
            <person name="Leongamornlert D.A."/>
            <person name="Leversha M."/>
            <person name="Lloyd C.R."/>
            <person name="Lloyd D.M."/>
            <person name="Loveland J.E."/>
            <person name="Lovell J."/>
            <person name="Martin S."/>
            <person name="Mashreghi-Mohammadi M."/>
            <person name="Maslen G.L."/>
            <person name="Matthews L."/>
            <person name="McCann O.T."/>
            <person name="McLaren S.J."/>
            <person name="McLay K."/>
            <person name="McMurray A."/>
            <person name="Moore M.J.F."/>
            <person name="Mullikin J.C."/>
            <person name="Niblett D."/>
            <person name="Nickerson T."/>
            <person name="Novik K.L."/>
            <person name="Oliver K."/>
            <person name="Overton-Larty E.K."/>
            <person name="Parker A."/>
            <person name="Patel R."/>
            <person name="Pearce A.V."/>
            <person name="Peck A.I."/>
            <person name="Phillimore B.J.C.T."/>
            <person name="Phillips S."/>
            <person name="Plumb R.W."/>
            <person name="Porter K.M."/>
            <person name="Ramsey Y."/>
            <person name="Ranby S.A."/>
            <person name="Rice C.M."/>
            <person name="Ross M.T."/>
            <person name="Searle S.M."/>
            <person name="Sehra H.K."/>
            <person name="Sheridan E."/>
            <person name="Skuce C.D."/>
            <person name="Smith S."/>
            <person name="Smith M."/>
            <person name="Spraggon L."/>
            <person name="Squares S.L."/>
            <person name="Steward C.A."/>
            <person name="Sycamore N."/>
            <person name="Tamlyn-Hall G."/>
            <person name="Tester J."/>
            <person name="Theaker A.J."/>
            <person name="Thomas D.W."/>
            <person name="Thorpe A."/>
            <person name="Tracey A."/>
            <person name="Tromans A."/>
            <person name="Tubby B."/>
            <person name="Wall M."/>
            <person name="Wallis J.M."/>
            <person name="West A.P."/>
            <person name="White S.S."/>
            <person name="Whitehead S.L."/>
            <person name="Whittaker H."/>
            <person name="Wild A."/>
            <person name="Willey D.J."/>
            <person name="Wilmer T.E."/>
            <person name="Wood J.M."/>
            <person name="Wray P.W."/>
            <person name="Wyatt J.C."/>
            <person name="Young L."/>
            <person name="Younger R.M."/>
            <person name="Bentley D.R."/>
            <person name="Coulson A."/>
            <person name="Durbin R.M."/>
            <person name="Hubbard T."/>
            <person name="Sulston J.E."/>
            <person name="Dunham I."/>
            <person name="Rogers J."/>
            <person name="Beck S."/>
        </authorList>
    </citation>
    <scope>NUCLEOTIDE SEQUENCE [LARGE SCALE GENOMIC DNA]</scope>
    <scope>VARIANTS ALA-302 AND GLU-2518</scope>
</reference>
<reference key="4">
    <citation type="submission" date="2005-07" db="EMBL/GenBank/DDBJ databases">
        <authorList>
            <person name="Mural R.J."/>
            <person name="Istrail S."/>
            <person name="Sutton G.G."/>
            <person name="Florea L."/>
            <person name="Halpern A.L."/>
            <person name="Mobarry C.M."/>
            <person name="Lippert R."/>
            <person name="Walenz B."/>
            <person name="Shatkay H."/>
            <person name="Dew I."/>
            <person name="Miller J.R."/>
            <person name="Flanigan M.J."/>
            <person name="Edwards N.J."/>
            <person name="Bolanos R."/>
            <person name="Fasulo D."/>
            <person name="Halldorsson B.V."/>
            <person name="Hannenhalli S."/>
            <person name="Turner R."/>
            <person name="Yooseph S."/>
            <person name="Lu F."/>
            <person name="Nusskern D.R."/>
            <person name="Shue B.C."/>
            <person name="Zheng X.H."/>
            <person name="Zhong F."/>
            <person name="Delcher A.L."/>
            <person name="Huson D.H."/>
            <person name="Kravitz S.A."/>
            <person name="Mouchard L."/>
            <person name="Reinert K."/>
            <person name="Remington K.A."/>
            <person name="Clark A.G."/>
            <person name="Waterman M.S."/>
            <person name="Eichler E.E."/>
            <person name="Adams M.D."/>
            <person name="Hunkapiller M.W."/>
            <person name="Myers E.W."/>
            <person name="Venter J.C."/>
        </authorList>
    </citation>
    <scope>NUCLEOTIDE SEQUENCE [LARGE SCALE GENOMIC DNA]</scope>
</reference>
<reference key="5">
    <citation type="journal article" date="2004" name="Genome Res.">
        <title>The status, quality, and expansion of the NIH full-length cDNA project: the Mammalian Gene Collection (MGC).</title>
        <authorList>
            <consortium name="The MGC Project Team"/>
        </authorList>
    </citation>
    <scope>NUCLEOTIDE SEQUENCE [LARGE SCALE MRNA] (ISOFORM XB-SHORT)</scope>
</reference>
<reference key="6">
    <citation type="journal article" date="1993" name="J. Cell Biol.">
        <title>Tenascin-X: a novel extracellular matrix protein encoded by the human XB gene overlapping P450c21B.</title>
        <authorList>
            <person name="Bristow J."/>
            <person name="Tee M.K."/>
            <person name="Gitelman S.E."/>
            <person name="Mellon S.H."/>
            <person name="Miller W.L."/>
        </authorList>
    </citation>
    <scope>NUCLEOTIDE SEQUENCE [MRNA] OF 1-747 (ISOFORM 5)</scope>
    <scope>NUCLEOTIDE SEQUENCE [MRNA] OF 1605-1862 (ISOFORMS 3/4/5)</scope>
    <source>
        <tissue>Leukocyte</tissue>
    </source>
</reference>
<reference key="7">
    <citation type="journal article" date="1996" name="Hum. Mol. Genet.">
        <title>Alternate promoters and alternate splicing of human tenascin-X, a gene with 5' and 3' ends buried in other genes.</title>
        <authorList>
            <person name="Speek M."/>
            <person name="Barry F."/>
            <person name="Miller W.L."/>
        </authorList>
    </citation>
    <scope>NUCLEOTIDE SEQUENCE [MRNA] OF 1-23 (ISOFORMS 3/4/5)</scope>
    <source>
        <tissue>Fetal adrenal gland</tissue>
    </source>
</reference>
<reference key="8">
    <citation type="journal article" date="1992" name="Genomics">
        <title>Cluster of fibronectin type III repeats found in the human major histocompatibility complex class III region shows the highest homology with the repeats in an extracellular matrix protein, tenascin.</title>
        <authorList>
            <person name="Matsumoto K."/>
            <person name="Arai M."/>
            <person name="Ishihara N."/>
            <person name="Ando A."/>
            <person name="Inoko H."/>
            <person name="Ikemura T."/>
        </authorList>
    </citation>
    <scope>NUCLEOTIDE SEQUENCE [GENOMIC DNA] OF 1061-1148; 2521-2607; 2627-2714 AND 2735-2821</scope>
    <source>
        <tissue>B-cell</tissue>
    </source>
</reference>
<reference key="9">
    <citation type="journal article" date="2007" name="FEBS J.">
        <title>Identification and characterization of multiple species of tenascin-X in human serum.</title>
        <authorList>
            <person name="Egging D.F."/>
            <person name="Peeters A.C.T.M."/>
            <person name="Grebenchtchikov N."/>
            <person name="Geurts-Moespot A."/>
            <person name="Sweep C.G.J."/>
            <person name="den Heijer M."/>
            <person name="Schalkwijk J."/>
        </authorList>
    </citation>
    <scope>PROTEIN SEQUENCE OF 1399-1407; 1438-1448; 2122-2130; 2438-2446; 2549-2557; 2763-2771; 2782-2799; 2979-2987; 3018-3028; 3193-3201; 3212-3229 AND 3232-3242 (ISOFORMS 3/4/5)</scope>
    <scope>PROTEIN SEQUENCE OF 3609-3621 AND 3633-3665 (ISOFORMS XB-SHORT/3/4/5)</scope>
    <scope>INTERACTION WITH TROPOELASTIN</scope>
    <scope>DEVELOPMENTAL STAGE</scope>
</reference>
<reference key="10">
    <citation type="submission" date="2005-03" db="EMBL/GenBank/DDBJ databases">
        <authorList>
            <person name="Totoki Y."/>
            <person name="Toyoda A."/>
            <person name="Takeda T."/>
            <person name="Sakaki Y."/>
            <person name="Tanaka A."/>
            <person name="Yokoyama S."/>
            <person name="Ohara O."/>
            <person name="Nagase T."/>
            <person name="Kikuno R.F."/>
        </authorList>
    </citation>
    <scope>NUCLEOTIDE SEQUENCE [LARGE SCALE MRNA] OF 3360-4244 (ISOFORMS 3/4/5)</scope>
    <source>
        <tissue>Brain</tissue>
    </source>
</reference>
<reference key="11">
    <citation type="journal article" date="1989" name="Proc. Natl. Acad. Sci. U.S.A.">
        <title>Transcript encoded on the opposite strand of the human steroid 21-hydroxylase/complement component C4 gene locus.</title>
        <authorList>
            <person name="Morel Y."/>
            <person name="Bristow J."/>
            <person name="Gitelman S.E."/>
            <person name="Miller W.L."/>
        </authorList>
    </citation>
    <scope>NUCLEOTIDE SEQUENCE [MRNA] OF 3425-4244 (ISOFORMS 3/4/5)</scope>
</reference>
<reference key="12">
    <citation type="journal article" date="2005" name="J. Proteome Res.">
        <title>Human plasma N-glycoproteome analysis by immunoaffinity subtraction, hydrazide chemistry, and mass spectrometry.</title>
        <authorList>
            <person name="Liu T."/>
            <person name="Qian W.-J."/>
            <person name="Gritsenko M.A."/>
            <person name="Camp D.G. II"/>
            <person name="Monroe M.E."/>
            <person name="Moore R.J."/>
            <person name="Smith R.D."/>
        </authorList>
    </citation>
    <scope>GLYCOSYLATION [LARGE SCALE ANALYSIS] AT ASN-3920</scope>
    <source>
        <tissue>Plasma</tissue>
    </source>
</reference>
<reference key="13">
    <citation type="journal article" date="2007" name="Arch. Dermatol. Res.">
        <title>Interactions of human tenascin-X domains with dermal extracellular matrix molecules.</title>
        <authorList>
            <person name="Egging D.F."/>
            <person name="van den Berkmortel F."/>
            <person name="Taylor G."/>
            <person name="Bristow J."/>
            <person name="Schalkwijk J."/>
        </authorList>
    </citation>
    <scope>FUNCTION</scope>
    <scope>INTERACTION WITH COLLAGEN AND TROPOELASTIN</scope>
</reference>
<reference key="14">
    <citation type="journal article" date="2014" name="J. Proteomics">
        <title>An enzyme assisted RP-RPLC approach for in-depth analysis of human liver phosphoproteome.</title>
        <authorList>
            <person name="Bian Y."/>
            <person name="Song C."/>
            <person name="Cheng K."/>
            <person name="Dong M."/>
            <person name="Wang F."/>
            <person name="Huang J."/>
            <person name="Sun D."/>
            <person name="Wang L."/>
            <person name="Ye M."/>
            <person name="Zou H."/>
        </authorList>
    </citation>
    <scope>IDENTIFICATION BY MASS SPECTROMETRY [LARGE SCALE ANALYSIS]</scope>
    <source>
        <tissue>Liver</tissue>
    </source>
</reference>
<reference key="15">
    <citation type="submission" date="2005-11" db="PDB data bank">
        <title>Solution structure of the 29th, 31st and 33rd fibronectin type-III domains of the human tenascin-X.</title>
        <authorList>
            <consortium name="RIKEN structural genomics initiative (RSGI)"/>
        </authorList>
    </citation>
    <scope>STRUCTURE BY NMR OF 3654-4024</scope>
</reference>
<reference key="16">
    <citation type="journal article" date="2001" name="N. Engl. J. Med.">
        <title>A recessive form of the Ehlers-Danlos syndrome caused by tenascin-X deficiency.</title>
        <authorList>
            <person name="Schalkwijk J."/>
            <person name="Zweers M.C."/>
            <person name="Steijlen P.M."/>
            <person name="Dean W.B."/>
            <person name="Taylor G."/>
            <person name="van Vlijmen I.M."/>
            <person name="van Haren B."/>
            <person name="Miller W.L."/>
            <person name="Bristow J."/>
        </authorList>
    </citation>
    <scope>INVOLVEMENT IN EDSCLL1</scope>
</reference>
<reference key="17">
    <citation type="journal article" date="2005" name="Clin. Genet.">
        <title>Elastic fiber abnormalities in hypermobility type Ehlers-Danlos syndrome patients with tenascin-X mutations.</title>
        <authorList>
            <person name="Zweers M.C."/>
            <person name="Dean W.B."/>
            <person name="van Kuppevelt T.H."/>
            <person name="Bristow J."/>
            <person name="Schalkwijk J."/>
        </authorList>
    </citation>
    <scope>VARIANTS EDSCLL1 TRP-29 AND MET-1108</scope>
    <scope>VARIANT ILE-3988</scope>
</reference>
<reference key="18">
    <citation type="journal article" date="2013" name="Neuromuscul. Disord.">
        <title>Compound heterozygous mutations of the TNXB gene cause primary myopathy.</title>
        <authorList>
            <person name="Penisson-Besnier I."/>
            <person name="Allamand V."/>
            <person name="Beurrier P."/>
            <person name="Martin L."/>
            <person name="Schalkwijk J."/>
            <person name="van Vlijmen-Willems I."/>
            <person name="Gartioux C."/>
            <person name="Malfait F."/>
            <person name="Syx D."/>
            <person name="Macchi L."/>
            <person name="Marcorelles P."/>
            <person name="Arbeille B."/>
            <person name="Croue A."/>
            <person name="De Paepe A."/>
            <person name="Dubas F."/>
        </authorList>
    </citation>
    <scope>VARIANT EDSCLL1 CYS-4074</scope>
</reference>
<reference key="19">
    <citation type="journal article" date="2013" name="J. Am. Soc. Nephrol.">
        <title>TNXB mutations can cause vesicoureteral reflux.</title>
        <authorList>
            <person name="Gbadegesin R.A."/>
            <person name="Brophy P.D."/>
            <person name="Adeyemo A."/>
            <person name="Hall G."/>
            <person name="Gupta I.R."/>
            <person name="Hains D."/>
            <person name="Bartkowiak B."/>
            <person name="Rabinovich C.E."/>
            <person name="Chandrasekharappa S."/>
            <person name="Homstad A."/>
            <person name="Westreich K."/>
            <person name="Wu G."/>
            <person name="Liu Y."/>
            <person name="Holanda D."/>
            <person name="Clarke J."/>
            <person name="Lavin P."/>
            <person name="Selim A."/>
            <person name="Miller S."/>
            <person name="Wiener J.S."/>
            <person name="Ross S.S."/>
            <person name="Foreman J."/>
            <person name="Rotimi C."/>
            <person name="Winn M.P."/>
        </authorList>
    </citation>
    <scope>VARIANTS VUR8 ARG-1244 AND ILE-3212</scope>
</reference>
<feature type="signal peptide" evidence="2">
    <location>
        <begin position="1"/>
        <end position="23"/>
    </location>
</feature>
<feature type="chain" id="PRO_0000007751" description="Tenascin-X">
    <location>
        <begin position="24"/>
        <end position="4244"/>
    </location>
</feature>
<feature type="domain" description="EGF-like 1; incomplete" evidence="3">
    <location>
        <begin position="156"/>
        <end position="168"/>
    </location>
</feature>
<feature type="domain" description="EGF-like 2" evidence="3">
    <location>
        <begin position="183"/>
        <end position="213"/>
    </location>
</feature>
<feature type="domain" description="EGF-like 3" evidence="3">
    <location>
        <begin position="214"/>
        <end position="244"/>
    </location>
</feature>
<feature type="domain" description="EGF-like 4" evidence="3">
    <location>
        <begin position="245"/>
        <end position="275"/>
    </location>
</feature>
<feature type="domain" description="EGF-like 5" evidence="3">
    <location>
        <begin position="276"/>
        <end position="306"/>
    </location>
</feature>
<feature type="domain" description="EGF-like 6" evidence="3">
    <location>
        <begin position="307"/>
        <end position="337"/>
    </location>
</feature>
<feature type="domain" description="EGF-like 7" evidence="3">
    <location>
        <begin position="338"/>
        <end position="368"/>
    </location>
</feature>
<feature type="domain" description="EGF-like 8" evidence="3">
    <location>
        <begin position="369"/>
        <end position="399"/>
    </location>
</feature>
<feature type="domain" description="EGF-like 9" evidence="3">
    <location>
        <begin position="400"/>
        <end position="430"/>
    </location>
</feature>
<feature type="domain" description="EGF-like 10" evidence="3">
    <location>
        <begin position="431"/>
        <end position="461"/>
    </location>
</feature>
<feature type="domain" description="EGF-like 11" evidence="3">
    <location>
        <begin position="462"/>
        <end position="492"/>
    </location>
</feature>
<feature type="domain" description="EGF-like 12" evidence="3">
    <location>
        <begin position="493"/>
        <end position="523"/>
    </location>
</feature>
<feature type="domain" description="EGF-like 13" evidence="3">
    <location>
        <begin position="524"/>
        <end position="554"/>
    </location>
</feature>
<feature type="domain" description="EGF-like 14" evidence="3">
    <location>
        <begin position="555"/>
        <end position="585"/>
    </location>
</feature>
<feature type="domain" description="EGF-like 15" evidence="3">
    <location>
        <begin position="586"/>
        <end position="616"/>
    </location>
</feature>
<feature type="domain" description="EGF-like 16" evidence="3">
    <location>
        <begin position="617"/>
        <end position="647"/>
    </location>
</feature>
<feature type="domain" description="EGF-like 17" evidence="3">
    <location>
        <begin position="648"/>
        <end position="679"/>
    </location>
</feature>
<feature type="domain" description="EGF-like 18" evidence="3">
    <location>
        <begin position="684"/>
        <end position="714"/>
    </location>
</feature>
<feature type="domain" description="EGF-like 19" evidence="3">
    <location>
        <begin position="715"/>
        <end position="746"/>
    </location>
</feature>
<feature type="domain" description="Fibronectin type-III 1" evidence="4">
    <location>
        <begin position="959"/>
        <end position="1051"/>
    </location>
</feature>
<feature type="domain" description="Fibronectin type-III 2" evidence="4">
    <location>
        <begin position="1064"/>
        <end position="1153"/>
    </location>
</feature>
<feature type="domain" description="Fibronectin type-III 3" evidence="4">
    <location>
        <begin position="1161"/>
        <end position="1249"/>
    </location>
</feature>
<feature type="domain" description="Fibronectin type-III 4" evidence="4">
    <location>
        <begin position="1263"/>
        <end position="1352"/>
    </location>
</feature>
<feature type="domain" description="Fibronectin type-III 5" evidence="4">
    <location>
        <begin position="1374"/>
        <end position="1468"/>
    </location>
</feature>
<feature type="domain" description="Fibronectin type-III 6" evidence="4">
    <location>
        <begin position="1476"/>
        <end position="1572"/>
    </location>
</feature>
<feature type="domain" description="Fibronectin type-III 7" evidence="4">
    <location>
        <begin position="1574"/>
        <end position="1669"/>
    </location>
</feature>
<feature type="domain" description="Fibronectin type-III 8" evidence="4">
    <location>
        <begin position="1674"/>
        <end position="1764"/>
    </location>
</feature>
<feature type="domain" description="Fibronectin type-III 9" evidence="4">
    <location>
        <begin position="1778"/>
        <end position="1868"/>
    </location>
</feature>
<feature type="domain" description="Fibronectin type-III 10" evidence="4">
    <location>
        <begin position="1883"/>
        <end position="1971"/>
    </location>
</feature>
<feature type="domain" description="Fibronectin type-III 11" evidence="4">
    <location>
        <begin position="1989"/>
        <end position="2089"/>
    </location>
</feature>
<feature type="domain" description="Fibronectin type-III 12" evidence="4">
    <location>
        <begin position="2097"/>
        <end position="2185"/>
    </location>
</feature>
<feature type="domain" description="Fibronectin type-III 13" evidence="4">
    <location>
        <begin position="2196"/>
        <end position="2296"/>
    </location>
</feature>
<feature type="domain" description="Fibronectin type-III 14" evidence="4">
    <location>
        <begin position="2305"/>
        <end position="2398"/>
    </location>
</feature>
<feature type="domain" description="Fibronectin type-III 15" evidence="4">
    <location>
        <begin position="2408"/>
        <end position="2502"/>
    </location>
</feature>
<feature type="domain" description="Fibronectin type-III 16" evidence="4">
    <location>
        <begin position="2519"/>
        <end position="2617"/>
    </location>
</feature>
<feature type="domain" description="Fibronectin type-III 17" evidence="4">
    <location>
        <begin position="2625"/>
        <end position="2723"/>
    </location>
</feature>
<feature type="domain" description="Fibronectin type-III 18" evidence="4">
    <location>
        <begin position="2733"/>
        <end position="2840"/>
    </location>
</feature>
<feature type="domain" description="Fibronectin type-III 19" evidence="4">
    <location>
        <begin position="2841"/>
        <end position="2939"/>
    </location>
</feature>
<feature type="domain" description="Fibronectin type-III 20" evidence="4">
    <location>
        <begin position="2949"/>
        <end position="3042"/>
    </location>
</feature>
<feature type="domain" description="Fibronectin type-III 21" evidence="4">
    <location>
        <begin position="3062"/>
        <end position="3153"/>
    </location>
</feature>
<feature type="domain" description="Fibronectin type-III 22" evidence="4">
    <location>
        <begin position="3168"/>
        <end position="3260"/>
    </location>
</feature>
<feature type="domain" description="Fibronectin type-III 23" evidence="4">
    <location>
        <begin position="3264"/>
        <end position="3355"/>
    </location>
</feature>
<feature type="domain" description="Fibronectin type-III 24" evidence="4">
    <location>
        <begin position="3357"/>
        <end position="3446"/>
    </location>
</feature>
<feature type="domain" description="Fibronectin type-III 25" evidence="4">
    <location>
        <begin position="3451"/>
        <end position="3544"/>
    </location>
</feature>
<feature type="domain" description="Fibronectin type-III 26" evidence="4">
    <location>
        <begin position="3553"/>
        <end position="3647"/>
    </location>
</feature>
<feature type="domain" description="Fibronectin type-III 27" evidence="4">
    <location>
        <begin position="3657"/>
        <end position="3754"/>
    </location>
</feature>
<feature type="domain" description="Fibronectin type-III 28" evidence="4">
    <location>
        <begin position="3758"/>
        <end position="3847"/>
    </location>
</feature>
<feature type="domain" description="Fibronectin type-III 29" evidence="4">
    <location>
        <begin position="3848"/>
        <end position="3934"/>
    </location>
</feature>
<feature type="domain" description="Fibronectin type-III 30" evidence="4">
    <location>
        <begin position="3935"/>
        <end position="4025"/>
    </location>
</feature>
<feature type="domain" description="Fibrinogen C-terminal" evidence="5">
    <location>
        <begin position="4021"/>
        <end position="4236"/>
    </location>
</feature>
<feature type="region of interest" description="Disordered" evidence="6">
    <location>
        <begin position="27"/>
        <end position="57"/>
    </location>
</feature>
<feature type="region of interest" description="Disordered" evidence="6">
    <location>
        <begin position="169"/>
        <end position="189"/>
    </location>
</feature>
<feature type="region of interest" description="Disordered" evidence="6">
    <location>
        <begin position="926"/>
        <end position="956"/>
    </location>
</feature>
<feature type="region of interest" description="Disordered" evidence="6">
    <location>
        <begin position="1340"/>
        <end position="1372"/>
    </location>
</feature>
<feature type="region of interest" description="Disordered" evidence="6">
    <location>
        <begin position="1752"/>
        <end position="1777"/>
    </location>
</feature>
<feature type="region of interest" description="Disordered" evidence="6">
    <location>
        <begin position="1968"/>
        <end position="1990"/>
    </location>
</feature>
<feature type="region of interest" description="Disordered" evidence="6">
    <location>
        <begin position="2281"/>
        <end position="2304"/>
    </location>
</feature>
<feature type="region of interest" description="Disordered" evidence="6">
    <location>
        <begin position="2495"/>
        <end position="2542"/>
    </location>
</feature>
<feature type="region of interest" description="Disordered" evidence="6">
    <location>
        <begin position="2824"/>
        <end position="2847"/>
    </location>
</feature>
<feature type="region of interest" description="Disordered" evidence="6">
    <location>
        <begin position="2933"/>
        <end position="2969"/>
    </location>
</feature>
<feature type="region of interest" description="Disordered" evidence="6">
    <location>
        <begin position="3536"/>
        <end position="3559"/>
    </location>
</feature>
<feature type="region of interest" description="Disordered" evidence="6">
    <location>
        <begin position="3636"/>
        <end position="3662"/>
    </location>
</feature>
<feature type="short sequence motif" description="Cell attachment site" evidence="2">
    <location>
        <begin position="1666"/>
        <end position="1668"/>
    </location>
</feature>
<feature type="compositionally biased region" description="Pro residues" evidence="6">
    <location>
        <begin position="1976"/>
        <end position="1987"/>
    </location>
</feature>
<feature type="compositionally biased region" description="Low complexity" evidence="6">
    <location>
        <begin position="2506"/>
        <end position="2516"/>
    </location>
</feature>
<feature type="compositionally biased region" description="Polar residues" evidence="6">
    <location>
        <begin position="2530"/>
        <end position="2542"/>
    </location>
</feature>
<feature type="compositionally biased region" description="Low complexity" evidence="6">
    <location>
        <begin position="2937"/>
        <end position="2946"/>
    </location>
</feature>
<feature type="compositionally biased region" description="Polar residues" evidence="6">
    <location>
        <begin position="2960"/>
        <end position="2969"/>
    </location>
</feature>
<feature type="glycosylation site" description="N-linked (GlcNAc...) asparagine" evidence="2">
    <location>
        <position position="31"/>
    </location>
</feature>
<feature type="glycosylation site" description="N-linked (GlcNAc...) asparagine" evidence="2">
    <location>
        <position position="3855"/>
    </location>
</feature>
<feature type="glycosylation site" description="N-linked (GlcNAc...) asparagine" evidence="2">
    <location>
        <position position="3908"/>
    </location>
</feature>
<feature type="glycosylation site" description="N-linked (GlcNAc...) asparagine" evidence="2">
    <location>
        <position position="3920"/>
    </location>
</feature>
<feature type="glycosylation site" description="N-linked (GlcNAc...) asparagine" evidence="2">
    <location>
        <position position="4095"/>
    </location>
</feature>
<feature type="disulfide bond" evidence="1">
    <location>
        <begin position="187"/>
        <end position="197"/>
    </location>
</feature>
<feature type="disulfide bond" evidence="1">
    <location>
        <begin position="191"/>
        <end position="202"/>
    </location>
</feature>
<feature type="disulfide bond" evidence="1">
    <location>
        <begin position="204"/>
        <end position="213"/>
    </location>
</feature>
<feature type="disulfide bond" evidence="1">
    <location>
        <begin position="218"/>
        <end position="228"/>
    </location>
</feature>
<feature type="disulfide bond" evidence="1">
    <location>
        <begin position="222"/>
        <end position="233"/>
    </location>
</feature>
<feature type="disulfide bond" evidence="1">
    <location>
        <begin position="235"/>
        <end position="244"/>
    </location>
</feature>
<feature type="disulfide bond" evidence="1">
    <location>
        <begin position="249"/>
        <end position="259"/>
    </location>
</feature>
<feature type="disulfide bond" evidence="1">
    <location>
        <begin position="253"/>
        <end position="264"/>
    </location>
</feature>
<feature type="disulfide bond" evidence="1">
    <location>
        <begin position="266"/>
        <end position="275"/>
    </location>
</feature>
<feature type="disulfide bond" evidence="1">
    <location>
        <begin position="280"/>
        <end position="290"/>
    </location>
</feature>
<feature type="disulfide bond" evidence="1">
    <location>
        <begin position="284"/>
        <end position="295"/>
    </location>
</feature>
<feature type="disulfide bond" evidence="1">
    <location>
        <begin position="297"/>
        <end position="306"/>
    </location>
</feature>
<feature type="disulfide bond" evidence="1">
    <location>
        <begin position="311"/>
        <end position="321"/>
    </location>
</feature>
<feature type="disulfide bond" evidence="1">
    <location>
        <begin position="315"/>
        <end position="326"/>
    </location>
</feature>
<feature type="disulfide bond" evidence="1">
    <location>
        <begin position="328"/>
        <end position="337"/>
    </location>
</feature>
<feature type="disulfide bond" evidence="1">
    <location>
        <begin position="342"/>
        <end position="352"/>
    </location>
</feature>
<feature type="disulfide bond" evidence="1">
    <location>
        <begin position="346"/>
        <end position="357"/>
    </location>
</feature>
<feature type="disulfide bond" evidence="1">
    <location>
        <begin position="359"/>
        <end position="368"/>
    </location>
</feature>
<feature type="disulfide bond" evidence="1">
    <location>
        <begin position="373"/>
        <end position="383"/>
    </location>
</feature>
<feature type="disulfide bond" evidence="1">
    <location>
        <begin position="377"/>
        <end position="388"/>
    </location>
</feature>
<feature type="disulfide bond" evidence="1">
    <location>
        <begin position="390"/>
        <end position="399"/>
    </location>
</feature>
<feature type="disulfide bond" evidence="1">
    <location>
        <begin position="404"/>
        <end position="414"/>
    </location>
</feature>
<feature type="disulfide bond" evidence="1">
    <location>
        <begin position="408"/>
        <end position="419"/>
    </location>
</feature>
<feature type="disulfide bond" evidence="1">
    <location>
        <begin position="421"/>
        <end position="430"/>
    </location>
</feature>
<feature type="disulfide bond" evidence="1">
    <location>
        <begin position="435"/>
        <end position="445"/>
    </location>
</feature>
<feature type="disulfide bond" evidence="1">
    <location>
        <begin position="439"/>
        <end position="450"/>
    </location>
</feature>
<feature type="disulfide bond" evidence="1">
    <location>
        <begin position="452"/>
        <end position="461"/>
    </location>
</feature>
<feature type="disulfide bond" evidence="1">
    <location>
        <begin position="466"/>
        <end position="476"/>
    </location>
</feature>
<feature type="disulfide bond" evidence="1">
    <location>
        <begin position="470"/>
        <end position="481"/>
    </location>
</feature>
<feature type="disulfide bond" evidence="1">
    <location>
        <begin position="483"/>
        <end position="492"/>
    </location>
</feature>
<feature type="disulfide bond" evidence="1">
    <location>
        <begin position="497"/>
        <end position="507"/>
    </location>
</feature>
<feature type="disulfide bond" evidence="1">
    <location>
        <begin position="501"/>
        <end position="512"/>
    </location>
</feature>
<feature type="disulfide bond" evidence="1">
    <location>
        <begin position="514"/>
        <end position="523"/>
    </location>
</feature>
<feature type="disulfide bond" evidence="1">
    <location>
        <begin position="528"/>
        <end position="538"/>
    </location>
</feature>
<feature type="disulfide bond" evidence="1">
    <location>
        <begin position="532"/>
        <end position="543"/>
    </location>
</feature>
<feature type="disulfide bond" evidence="1">
    <location>
        <begin position="545"/>
        <end position="554"/>
    </location>
</feature>
<feature type="disulfide bond" evidence="1">
    <location>
        <begin position="559"/>
        <end position="569"/>
    </location>
</feature>
<feature type="disulfide bond" evidence="1">
    <location>
        <begin position="563"/>
        <end position="574"/>
    </location>
</feature>
<feature type="disulfide bond" evidence="1">
    <location>
        <begin position="576"/>
        <end position="585"/>
    </location>
</feature>
<feature type="disulfide bond" evidence="1">
    <location>
        <begin position="590"/>
        <end position="600"/>
    </location>
</feature>
<feature type="disulfide bond" evidence="1">
    <location>
        <begin position="594"/>
        <end position="605"/>
    </location>
</feature>
<feature type="disulfide bond" evidence="1">
    <location>
        <begin position="607"/>
        <end position="616"/>
    </location>
</feature>
<feature type="disulfide bond" evidence="1">
    <location>
        <begin position="621"/>
        <end position="631"/>
    </location>
</feature>
<feature type="disulfide bond" evidence="1">
    <location>
        <begin position="625"/>
        <end position="636"/>
    </location>
</feature>
<feature type="disulfide bond" evidence="1">
    <location>
        <begin position="638"/>
        <end position="647"/>
    </location>
</feature>
<feature type="disulfide bond" evidence="1">
    <location>
        <begin position="652"/>
        <end position="662"/>
    </location>
</feature>
<feature type="disulfide bond" evidence="1">
    <location>
        <begin position="656"/>
        <end position="667"/>
    </location>
</feature>
<feature type="disulfide bond" evidence="1">
    <location>
        <begin position="669"/>
        <end position="678"/>
    </location>
</feature>
<feature type="disulfide bond" evidence="1">
    <location>
        <begin position="688"/>
        <end position="698"/>
    </location>
</feature>
<feature type="disulfide bond" evidence="1">
    <location>
        <begin position="692"/>
        <end position="703"/>
    </location>
</feature>
<feature type="disulfide bond" evidence="1">
    <location>
        <begin position="705"/>
        <end position="714"/>
    </location>
</feature>
<feature type="disulfide bond" evidence="1">
    <location>
        <begin position="719"/>
        <end position="729"/>
    </location>
</feature>
<feature type="disulfide bond" evidence="1">
    <location>
        <begin position="723"/>
        <end position="734"/>
    </location>
</feature>
<feature type="disulfide bond" evidence="1">
    <location>
        <begin position="736"/>
        <end position="745"/>
    </location>
</feature>
<feature type="disulfide bond" evidence="1">
    <location>
        <begin position="4030"/>
        <end position="4060"/>
    </location>
</feature>
<feature type="disulfide bond" evidence="1">
    <location>
        <begin position="4182"/>
        <end position="4195"/>
    </location>
</feature>
<feature type="splice variant" id="VSP_059792" description="In isoform XB-short.">
    <location>
        <begin position="1"/>
        <end position="3571"/>
    </location>
</feature>
<feature type="splice variant" id="VSP_059793" description="In isoform 5.">
    <original>G</original>
    <variation>GEQG</variation>
    <location>
        <position position="135"/>
    </location>
</feature>
<feature type="splice variant" id="VSP_059794" description="In isoform 3 and isoform 5.">
    <original>APE</original>
    <variation>E</variation>
    <location>
        <begin position="2823"/>
        <end position="2825"/>
    </location>
</feature>
<feature type="sequence variant" id="VAR_046499" description="In EDSCLL1; dbSNP:rs368512272." evidence="10">
    <original>R</original>
    <variation>W</variation>
    <location>
        <position position="29"/>
    </location>
</feature>
<feature type="sequence variant" id="VAR_044347" description="In dbSNP:rs1150752." evidence="8">
    <original>T</original>
    <variation>A</variation>
    <location>
        <position position="302"/>
    </location>
</feature>
<feature type="sequence variant" id="VAR_021908" description="In dbSNP:rs204896.">
    <original>R</original>
    <variation>H</variation>
    <location>
        <position position="511"/>
    </location>
</feature>
<feature type="sequence variant" id="VAR_055781" description="In dbSNP:rs17201609.">
    <original>G</original>
    <variation>C</variation>
    <location>
        <position position="641"/>
    </location>
</feature>
<feature type="sequence variant" id="VAR_055782" description="In dbSNP:rs17201602.">
    <original>R</original>
    <variation>H</variation>
    <location>
        <position position="650"/>
    </location>
</feature>
<feature type="sequence variant" id="VAR_055783" description="In dbSNP:rs204900.">
    <original>S</original>
    <variation>A</variation>
    <location>
        <position position="873"/>
    </location>
</feature>
<feature type="sequence variant" id="VAR_046500" description="In EDSCLL1; dbSNP:rs121912575." evidence="10">
    <original>V</original>
    <variation>M</variation>
    <location>
        <position position="1108"/>
    </location>
</feature>
<feature type="sequence variant" id="VAR_024270" description="In dbSNP:rs185819.">
    <original>H</original>
    <variation>R</variation>
    <location>
        <position position="1161"/>
    </location>
</feature>
<feature type="sequence variant" id="VAR_072580" description="In VUR8." evidence="13">
    <original>T</original>
    <variation>R</variation>
    <location>
        <position position="1244"/>
    </location>
</feature>
<feature type="sequence variant" id="VAR_059276" description="In dbSNP:rs17207923.">
    <original>E</original>
    <variation>K</variation>
    <location>
        <position position="1905"/>
    </location>
</feature>
<feature type="sequence variant" id="VAR_020170" description="In dbSNP:rs2269428.">
    <original>P</original>
    <variation>H</variation>
    <location>
        <position position="2301"/>
    </location>
</feature>
<feature type="sequence variant" id="VAR_055784" description="In dbSNP:rs2269428.">
    <original>P</original>
    <variation>H</variation>
    <location>
        <position position="2363"/>
    </location>
</feature>
<feature type="sequence variant" id="VAR_059277" description="In dbSNP:rs12524664.">
    <original>P</original>
    <variation>L</variation>
    <location>
        <position position="2412"/>
    </location>
</feature>
<feature type="sequence variant" id="VAR_020171" description="In dbSNP:rs2269429.">
    <original>G</original>
    <variation>S</variation>
    <location>
        <position position="2495"/>
    </location>
</feature>
<feature type="sequence variant" id="VAR_020172" description="In dbSNP:rs1009382." evidence="8 9">
    <original>G</original>
    <variation>E</variation>
    <location>
        <position position="2518"/>
    </location>
</feature>
<feature type="sequence variant" id="VAR_072581" description="In VUR8; shows significantly impaired migration in a wound-healing assay; dbSNP:rs1473257039." evidence="13">
    <original>V</original>
    <variation>I</variation>
    <location>
        <position position="3212"/>
    </location>
</feature>
<feature type="sequence variant" id="VAR_046501" description="In dbSNP:rs7742632." evidence="10">
    <original>L</original>
    <variation>I</variation>
    <location>
        <position position="3988"/>
    </location>
</feature>
<feature type="sequence variant" id="VAR_072582" description="In EDSCLL1; dbSNP:rs587777682." evidence="14">
    <original>R</original>
    <variation>C</variation>
    <location>
        <position position="4074"/>
    </location>
</feature>
<feature type="sequence conflict" description="In Ref. 5; AAH33740." evidence="15" ref="5">
    <original>Q</original>
    <variation>L</variation>
    <location>
        <position position="3791"/>
    </location>
</feature>
<feature type="sequence conflict" description="In Ref. 5; AAI25115/AAI25116 and 10; BAD92249." evidence="15" ref="5 10">
    <original>V</original>
    <variation>I</variation>
    <location>
        <position position="3877"/>
    </location>
</feature>
<feature type="sequence conflict" description="In Ref. 5; AAI25115/AAI25116 and 10; BAD92249." evidence="15" ref="5 10">
    <original>N</original>
    <variation>T</variation>
    <location>
        <position position="3974"/>
    </location>
</feature>
<feature type="sequence conflict" description="In Ref. 1; AAB41287 and 11; AAA35884." evidence="15" ref="1 11">
    <original>P</original>
    <variation>G</variation>
    <location>
        <position position="3993"/>
    </location>
</feature>
<feature type="sequence conflict" description="In Ref. 5; AAI25116 and 10; BAD92249." evidence="15" ref="5 10">
    <original>M</original>
    <variation>T</variation>
    <location>
        <position position="4004"/>
    </location>
</feature>
<feature type="sequence conflict" description="In Ref. 5; AAI25115." evidence="15" ref="5">
    <original>N</original>
    <variation>I</variation>
    <location>
        <position position="4057"/>
    </location>
</feature>
<feature type="sequence conflict" description="In Ref. 1; AAB41287 and 11; AAA35884." evidence="15" ref="1 11">
    <original>M</original>
    <variation>I</variation>
    <location>
        <position position="4118"/>
    </location>
</feature>
<feature type="strand" evidence="18">
    <location>
        <begin position="3662"/>
        <end position="3665"/>
    </location>
</feature>
<feature type="strand" evidence="18">
    <location>
        <begin position="3671"/>
        <end position="3674"/>
    </location>
</feature>
<feature type="strand" evidence="18">
    <location>
        <begin position="3683"/>
        <end position="3690"/>
    </location>
</feature>
<feature type="strand" evidence="18">
    <location>
        <begin position="3695"/>
        <end position="3697"/>
    </location>
</feature>
<feature type="strand" evidence="18">
    <location>
        <begin position="3707"/>
        <end position="3712"/>
    </location>
</feature>
<feature type="strand" evidence="18">
    <location>
        <begin position="3717"/>
        <end position="3720"/>
    </location>
</feature>
<feature type="strand" evidence="18">
    <location>
        <begin position="3728"/>
        <end position="3736"/>
    </location>
</feature>
<feature type="strand" evidence="18">
    <location>
        <begin position="3738"/>
        <end position="3750"/>
    </location>
</feature>
<feature type="strand" evidence="17">
    <location>
        <begin position="3849"/>
        <end position="3852"/>
    </location>
</feature>
<feature type="strand" evidence="17">
    <location>
        <begin position="3857"/>
        <end position="3859"/>
    </location>
</feature>
<feature type="strand" evidence="17">
    <location>
        <begin position="3861"/>
        <end position="3866"/>
    </location>
</feature>
<feature type="strand" evidence="17">
    <location>
        <begin position="3873"/>
        <end position="3880"/>
    </location>
</feature>
<feature type="strand" evidence="17">
    <location>
        <begin position="3882"/>
        <end position="3884"/>
    </location>
</feature>
<feature type="strand" evidence="17">
    <location>
        <begin position="3887"/>
        <end position="3892"/>
    </location>
</feature>
<feature type="strand" evidence="17">
    <location>
        <begin position="3896"/>
        <end position="3900"/>
    </location>
</feature>
<feature type="strand" evidence="17">
    <location>
        <begin position="3905"/>
        <end position="3917"/>
    </location>
</feature>
<feature type="strand" evidence="17">
    <location>
        <begin position="3925"/>
        <end position="3931"/>
    </location>
</feature>
<feature type="turn" evidence="17">
    <location>
        <begin position="3936"/>
        <end position="3938"/>
    </location>
</feature>
<feature type="strand" evidence="17">
    <location>
        <begin position="3939"/>
        <end position="3941"/>
    </location>
</feature>
<feature type="strand" evidence="19">
    <location>
        <begin position="3949"/>
        <end position="3954"/>
    </location>
</feature>
<feature type="strand" evidence="19">
    <location>
        <begin position="3961"/>
        <end position="3968"/>
    </location>
</feature>
<feature type="strand" evidence="19">
    <location>
        <begin position="3974"/>
        <end position="3979"/>
    </location>
</feature>
<feature type="strand" evidence="19">
    <location>
        <begin position="3984"/>
        <end position="3988"/>
    </location>
</feature>
<feature type="strand" evidence="19">
    <location>
        <begin position="3996"/>
        <end position="4005"/>
    </location>
</feature>
<feature type="strand" evidence="19">
    <location>
        <begin position="4013"/>
        <end position="4018"/>
    </location>
</feature>
<organism>
    <name type="scientific">Homo sapiens</name>
    <name type="common">Human</name>
    <dbReference type="NCBI Taxonomy" id="9606"/>
    <lineage>
        <taxon>Eukaryota</taxon>
        <taxon>Metazoa</taxon>
        <taxon>Chordata</taxon>
        <taxon>Craniata</taxon>
        <taxon>Vertebrata</taxon>
        <taxon>Euteleostomi</taxon>
        <taxon>Mammalia</taxon>
        <taxon>Eutheria</taxon>
        <taxon>Euarchontoglires</taxon>
        <taxon>Primates</taxon>
        <taxon>Haplorrhini</taxon>
        <taxon>Catarrhini</taxon>
        <taxon>Hominidae</taxon>
        <taxon>Homo</taxon>
    </lineage>
</organism>
<accession>P22105</accession>
<accession>P78530</accession>
<accession>P78531</accession>
<accession>Q08424</accession>
<accession>Q08AM0</accession>
<accession>Q08AM1</accession>
<accession>Q59GU7</accession>
<accession>Q5SQD3</accession>
<accession>Q5ST74</accession>
<accession>Q7L8Q4</accession>
<accession>Q8N4R1</accession>
<accession>Q9NPK9</accession>
<accession>Q9UC10</accession>
<accession>Q9UC11</accession>
<accession>Q9UC12</accession>
<accession>Q9UC13</accession>
<accession>Q9UMG7</accession>
<name>TENX_HUMAN</name>
<comment type="function">
    <text evidence="11">Appears to mediate interactions between cells and the extracellular matrix. Substrate-adhesion molecule that appears to inhibit cell migration. Accelerates collagen fibril formation. May play a role in supporting the growth of epithelial tumors.</text>
</comment>
<comment type="subunit">
    <text evidence="11 12">Homotrimer. Interacts with type I, III and V collagens and tropoelastin via its 29th fibronectin type-III domain.</text>
</comment>
<comment type="interaction">
    <interactant intactId="EBI-2821024">
        <id>P22105</id>
    </interactant>
    <interactant intactId="EBI-744695">
        <id>Q8N9N5</id>
        <label>BANP</label>
    </interactant>
    <organismsDiffer>false</organismsDiffer>
    <experiments>4</experiments>
</comment>
<comment type="interaction">
    <interactant intactId="EBI-2821024">
        <id>P22105</id>
    </interactant>
    <interactant intactId="EBI-779636">
        <id>P01137</id>
        <label>TGFB1</label>
    </interactant>
    <organismsDiffer>false</organismsDiffer>
    <experiments>3</experiments>
</comment>
<comment type="interaction">
    <interactant intactId="EBI-20753895">
        <id>P22105-1</id>
    </interactant>
    <interactant intactId="EBI-11524452">
        <id>Q8N9N5-2</id>
        <label>BANP</label>
    </interactant>
    <organismsDiffer>false</organismsDiffer>
    <experiments>3</experiments>
</comment>
<comment type="interaction">
    <interactant intactId="EBI-20753895">
        <id>P22105-1</id>
    </interactant>
    <interactant intactId="EBI-4314501">
        <id>P40199</id>
        <label>CEACAM6</label>
    </interactant>
    <organismsDiffer>false</organismsDiffer>
    <experiments>3</experiments>
</comment>
<comment type="interaction">
    <interactant intactId="EBI-20753895">
        <id>P22105-1</id>
    </interactant>
    <interactant intactId="EBI-466029">
        <id>P42858</id>
        <label>HTT</label>
    </interactant>
    <organismsDiffer>false</organismsDiffer>
    <experiments>3</experiments>
</comment>
<comment type="interaction">
    <interactant intactId="EBI-20753895">
        <id>P22105-1</id>
    </interactant>
    <interactant intactId="EBI-12029004">
        <id>P78424</id>
        <label>POU6F2</label>
    </interactant>
    <organismsDiffer>false</organismsDiffer>
    <experiments>3</experiments>
</comment>
<comment type="interaction">
    <interactant intactId="EBI-20753895">
        <id>P22105-1</id>
    </interactant>
    <interactant intactId="EBI-12029034">
        <id>Q96PF1</id>
        <label>TGM7</label>
    </interactant>
    <organismsDiffer>false</organismsDiffer>
    <experiments>3</experiments>
</comment>
<comment type="subcellular location">
    <subcellularLocation>
        <location>Secreted</location>
        <location>Extracellular space</location>
        <location>Extracellular matrix</location>
    </subcellularLocation>
</comment>
<comment type="alternative products">
    <event type="alternative splicing"/>
    <isoform>
        <id>P22105-3</id>
        <name>4</name>
        <sequence type="displayed"/>
    </isoform>
    <isoform>
        <id>P22105-1</id>
        <name>3</name>
        <sequence type="described" ref="VSP_059794"/>
    </isoform>
    <isoform>
        <id>P22105-2</id>
        <name>XB-short</name>
        <name>2</name>
        <sequence type="described" ref="VSP_059792"/>
    </isoform>
    <isoform>
        <id>P22105-4</id>
        <name>5</name>
        <sequence type="described" ref="VSP_059793 VSP_059794"/>
    </isoform>
</comment>
<comment type="tissue specificity">
    <text>Highly expressed in fetal adrenal, in fetal testis, fetal smooth, striated and cardiac muscle. Isoform XB-short is only expressed in the adrenal gland.</text>
</comment>
<comment type="developmental stage">
    <text evidence="12">Expression levels are lower in adults than in children.</text>
</comment>
<comment type="disease" evidence="7 10 14">
    <disease id="DI-01097">
        <name>Ehlers-Danlos syndrome, classic-like, 1</name>
        <acronym>EDSCLL1</acronym>
        <description>A form of Ehlers-Danlos syndrome, a group of connective tissue disorders characterized by skin hyperextensibility, articular hypermobility, and tissue fragility. EDSCLL1 patients lack atrophic scars, a major diagnostic criteria for classic Ehlers-Danlos syndrome. Delayed wound healing is only present in a subset of patients. EDSCLL1 inheritance is autosomal recessive.</description>
        <dbReference type="MIM" id="606408"/>
    </disease>
    <text>The disease is caused by variants affecting the gene represented in this entry.</text>
</comment>
<comment type="disease" evidence="13">
    <disease id="DI-04199">
        <name>Vesicoureteral reflux 8</name>
        <acronym>VUR8</acronym>
        <description>A disease belonging to the group of congenital anomalies of the kidney and urinary tract. It is characterized by the reflux of urine from the bladder into the ureters and sometimes into the kidneys, and is a risk factor for urinary tract infections. Primary disease results from a developmental defect of the ureterovesical junction. In combination with intrarenal reflux, the resulting inflammatory reaction may result in renal injury or scarring, also called reflux nephropathy. Extensive renal scarring impairs renal function and may predispose patients to hypertension, proteinuria, renal insufficiency and end-stage renal disease.</description>
        <dbReference type="MIM" id="615963"/>
    </disease>
    <text>The disease is caused by variants affecting the gene represented in this entry.</text>
</comment>
<comment type="miscellaneous">
    <molecule>Isoform 4</molecule>
    <text>May be due to competing acceptor splice site in exon 24.</text>
</comment>
<comment type="miscellaneous">
    <molecule>Isoform 5</molecule>
    <text evidence="15">May be due to competing donor splice site in exon 1.</text>
</comment>
<comment type="similarity">
    <text evidence="15">Belongs to the tenascin family.</text>
</comment>
<comment type="caution">
    <text evidence="15">There are two genes for TN-X: TNXA and TNXB. TNXA can sometimes recombine with TNXB.</text>
</comment>
<comment type="sequence caution" evidence="15">
    <conflict type="erroneous gene model prediction">
        <sequence resource="EMBL-CDS" id="AAB47488"/>
    </conflict>
</comment>
<comment type="sequence caution" evidence="15">
    <conflict type="erroneous gene model prediction">
        <sequence resource="EMBL-CDS" id="AAB67981"/>
    </conflict>
</comment>
<comment type="sequence caution" evidence="15">
    <conflict type="erroneous gene model prediction">
        <sequence resource="EMBL-CDS" id="CAB89296"/>
    </conflict>
</comment>